<evidence type="ECO:0000250" key="1"/>
<evidence type="ECO:0000255" key="2"/>
<evidence type="ECO:0000256" key="3">
    <source>
        <dbReference type="SAM" id="MobiDB-lite"/>
    </source>
</evidence>
<evidence type="ECO:0000305" key="4"/>
<name>LAC20_ORYSI</name>
<organism>
    <name type="scientific">Oryza sativa subsp. indica</name>
    <name type="common">Rice</name>
    <dbReference type="NCBI Taxonomy" id="39946"/>
    <lineage>
        <taxon>Eukaryota</taxon>
        <taxon>Viridiplantae</taxon>
        <taxon>Streptophyta</taxon>
        <taxon>Embryophyta</taxon>
        <taxon>Tracheophyta</taxon>
        <taxon>Spermatophyta</taxon>
        <taxon>Magnoliopsida</taxon>
        <taxon>Liliopsida</taxon>
        <taxon>Poales</taxon>
        <taxon>Poaceae</taxon>
        <taxon>BOP clade</taxon>
        <taxon>Oryzoideae</taxon>
        <taxon>Oryzeae</taxon>
        <taxon>Oryzinae</taxon>
        <taxon>Oryza</taxon>
        <taxon>Oryza sativa</taxon>
    </lineage>
</organism>
<sequence>MVASLLCTVAVAVLAVAAVGGEAGVVEHTFVVHEMNVTHLCNTTKIFVVNGQLPGPTVDVTEGDTVVVHVVNKIPHGLTIHWHGVRQLRSCWADGAGFITECPIPPGSERTYRFNVTDQVGTLWWHAHVTCLRSTINGAFIIRPRDGKYPFPTPVKDVPIIIGEWWELDLVELDRRMRDGNFDDNPLSATINGKLGDLSNCSGIVEESFVLNVKHGESYLLRVINTAFFSEYYFKVAGHTFTVVGADGNYLTPFKTDMVTVAPGEAIDVLMVADAPPAHYHMIVLANQPPEPDPQIPEYISRGLVRYTSADANNNGLPVPMPIMPNQHNTMPSYYFHANLTGLMHPKHRRVPMHVDERIFIILGLGTICRGRKHTCKRQRSLETIELSTMNNVSFTHPYTTALLERYYDGTPEGVYTEDFPVRPPRPYNYTNPALIPPGPLEEVLEPTFKATKLKRFKYNTSVEIIFQSSTLLMSDSNPMHLHGYDVFLLAQGLGSFNAKRDIRKFNYHNPQLRNTILVPRGGWAAVRFITDNPGMWYLHCHFEFHIIMGMATAFIVEDGPTPETSLPPPPPEFKRCDAS</sequence>
<feature type="signal peptide" evidence="2">
    <location>
        <begin position="1"/>
        <end position="23"/>
    </location>
</feature>
<feature type="chain" id="PRO_0000291906" description="Laccase-20">
    <location>
        <begin position="24"/>
        <end position="580"/>
    </location>
</feature>
<feature type="domain" description="Plastocyanin-like 1">
    <location>
        <begin position="31"/>
        <end position="147"/>
    </location>
</feature>
<feature type="domain" description="Plastocyanin-like 2">
    <location>
        <begin position="156"/>
        <end position="310"/>
    </location>
</feature>
<feature type="domain" description="Plastocyanin-like 3">
    <location>
        <begin position="419"/>
        <end position="561"/>
    </location>
</feature>
<feature type="region of interest" description="Disordered" evidence="3">
    <location>
        <begin position="560"/>
        <end position="580"/>
    </location>
</feature>
<feature type="binding site" evidence="1">
    <location>
        <position position="81"/>
    </location>
    <ligand>
        <name>Cu cation</name>
        <dbReference type="ChEBI" id="CHEBI:23378"/>
        <label>1</label>
    </ligand>
</feature>
<feature type="binding site" evidence="1">
    <location>
        <position position="83"/>
    </location>
    <ligand>
        <name>Cu cation</name>
        <dbReference type="ChEBI" id="CHEBI:23378"/>
        <label>2</label>
    </ligand>
</feature>
<feature type="binding site" evidence="1">
    <location>
        <position position="126"/>
    </location>
    <ligand>
        <name>Cu cation</name>
        <dbReference type="ChEBI" id="CHEBI:23378"/>
        <label>2</label>
    </ligand>
</feature>
<feature type="binding site" evidence="1">
    <location>
        <position position="128"/>
    </location>
    <ligand>
        <name>Cu cation</name>
        <dbReference type="ChEBI" id="CHEBI:23378"/>
        <label>3</label>
    </ligand>
</feature>
<feature type="binding site" evidence="2">
    <location>
        <position position="478"/>
    </location>
    <ligand>
        <name>Cu cation</name>
        <dbReference type="ChEBI" id="CHEBI:23378"/>
        <label>4</label>
    </ligand>
</feature>
<feature type="binding site" evidence="1">
    <location>
        <position position="481"/>
    </location>
    <ligand>
        <name>Cu cation</name>
        <dbReference type="ChEBI" id="CHEBI:23378"/>
        <label>1</label>
    </ligand>
</feature>
<feature type="binding site" evidence="1">
    <location>
        <position position="483"/>
    </location>
    <ligand>
        <name>Cu cation</name>
        <dbReference type="ChEBI" id="CHEBI:23378"/>
        <label>3</label>
    </ligand>
</feature>
<feature type="binding site" evidence="1">
    <location>
        <position position="540"/>
    </location>
    <ligand>
        <name>Cu cation</name>
        <dbReference type="ChEBI" id="CHEBI:23378"/>
        <label>3</label>
    </ligand>
</feature>
<feature type="binding site" evidence="2">
    <location>
        <position position="541"/>
    </location>
    <ligand>
        <name>Cu cation</name>
        <dbReference type="ChEBI" id="CHEBI:23378"/>
        <label>4</label>
    </ligand>
</feature>
<feature type="binding site" evidence="1">
    <location>
        <position position="542"/>
    </location>
    <ligand>
        <name>Cu cation</name>
        <dbReference type="ChEBI" id="CHEBI:23378"/>
        <label>2</label>
    </ligand>
</feature>
<feature type="binding site" evidence="2">
    <location>
        <position position="546"/>
    </location>
    <ligand>
        <name>Cu cation</name>
        <dbReference type="ChEBI" id="CHEBI:23378"/>
        <label>4</label>
    </ligand>
</feature>
<feature type="binding site" evidence="2">
    <location>
        <position position="551"/>
    </location>
    <ligand>
        <name>Cu cation</name>
        <dbReference type="ChEBI" id="CHEBI:23378"/>
        <label>4</label>
    </ligand>
</feature>
<feature type="glycosylation site" description="N-linked (GlcNAc...) asparagine" evidence="2">
    <location>
        <position position="36"/>
    </location>
</feature>
<feature type="glycosylation site" description="N-linked (GlcNAc...) asparagine" evidence="2">
    <location>
        <position position="42"/>
    </location>
</feature>
<feature type="glycosylation site" description="N-linked (GlcNAc...) asparagine" evidence="2">
    <location>
        <position position="115"/>
    </location>
</feature>
<feature type="glycosylation site" description="N-linked (GlcNAc...) asparagine" evidence="2">
    <location>
        <position position="200"/>
    </location>
</feature>
<feature type="glycosylation site" description="N-linked (GlcNAc...) asparagine" evidence="2">
    <location>
        <position position="339"/>
    </location>
</feature>
<feature type="glycosylation site" description="N-linked (GlcNAc...) asparagine" evidence="2">
    <location>
        <position position="392"/>
    </location>
</feature>
<feature type="glycosylation site" description="N-linked (GlcNAc...) asparagine" evidence="2">
    <location>
        <position position="429"/>
    </location>
</feature>
<feature type="glycosylation site" description="N-linked (GlcNAc...) asparagine" evidence="2">
    <location>
        <position position="460"/>
    </location>
</feature>
<gene>
    <name type="primary">LAC20</name>
    <name type="ORF">OsI_020915</name>
</gene>
<comment type="function">
    <text evidence="1">Lignin degradation and detoxification of lignin-derived products.</text>
</comment>
<comment type="catalytic activity">
    <reaction>
        <text>4 hydroquinone + O2 = 4 benzosemiquinone + 2 H2O</text>
        <dbReference type="Rhea" id="RHEA:11276"/>
        <dbReference type="ChEBI" id="CHEBI:15377"/>
        <dbReference type="ChEBI" id="CHEBI:15379"/>
        <dbReference type="ChEBI" id="CHEBI:17594"/>
        <dbReference type="ChEBI" id="CHEBI:17977"/>
        <dbReference type="EC" id="1.10.3.2"/>
    </reaction>
</comment>
<comment type="cofactor">
    <cofactor evidence="1">
        <name>Cu cation</name>
        <dbReference type="ChEBI" id="CHEBI:23378"/>
    </cofactor>
    <text evidence="1">Binds 4 Cu cations per monomer.</text>
</comment>
<comment type="subcellular location">
    <subcellularLocation>
        <location evidence="4">Secreted</location>
        <location evidence="4">Extracellular space</location>
        <location evidence="4">Apoplast</location>
    </subcellularLocation>
</comment>
<comment type="similarity">
    <text evidence="4">Belongs to the multicopper oxidase family.</text>
</comment>
<reference key="1">
    <citation type="journal article" date="2005" name="PLoS Biol.">
        <title>The genomes of Oryza sativa: a history of duplications.</title>
        <authorList>
            <person name="Yu J."/>
            <person name="Wang J."/>
            <person name="Lin W."/>
            <person name="Li S."/>
            <person name="Li H."/>
            <person name="Zhou J."/>
            <person name="Ni P."/>
            <person name="Dong W."/>
            <person name="Hu S."/>
            <person name="Zeng C."/>
            <person name="Zhang J."/>
            <person name="Zhang Y."/>
            <person name="Li R."/>
            <person name="Xu Z."/>
            <person name="Li S."/>
            <person name="Li X."/>
            <person name="Zheng H."/>
            <person name="Cong L."/>
            <person name="Lin L."/>
            <person name="Yin J."/>
            <person name="Geng J."/>
            <person name="Li G."/>
            <person name="Shi J."/>
            <person name="Liu J."/>
            <person name="Lv H."/>
            <person name="Li J."/>
            <person name="Wang J."/>
            <person name="Deng Y."/>
            <person name="Ran L."/>
            <person name="Shi X."/>
            <person name="Wang X."/>
            <person name="Wu Q."/>
            <person name="Li C."/>
            <person name="Ren X."/>
            <person name="Wang J."/>
            <person name="Wang X."/>
            <person name="Li D."/>
            <person name="Liu D."/>
            <person name="Zhang X."/>
            <person name="Ji Z."/>
            <person name="Zhao W."/>
            <person name="Sun Y."/>
            <person name="Zhang Z."/>
            <person name="Bao J."/>
            <person name="Han Y."/>
            <person name="Dong L."/>
            <person name="Ji J."/>
            <person name="Chen P."/>
            <person name="Wu S."/>
            <person name="Liu J."/>
            <person name="Xiao Y."/>
            <person name="Bu D."/>
            <person name="Tan J."/>
            <person name="Yang L."/>
            <person name="Ye C."/>
            <person name="Zhang J."/>
            <person name="Xu J."/>
            <person name="Zhou Y."/>
            <person name="Yu Y."/>
            <person name="Zhang B."/>
            <person name="Zhuang S."/>
            <person name="Wei H."/>
            <person name="Liu B."/>
            <person name="Lei M."/>
            <person name="Yu H."/>
            <person name="Li Y."/>
            <person name="Xu H."/>
            <person name="Wei S."/>
            <person name="He X."/>
            <person name="Fang L."/>
            <person name="Zhang Z."/>
            <person name="Zhang Y."/>
            <person name="Huang X."/>
            <person name="Su Z."/>
            <person name="Tong W."/>
            <person name="Li J."/>
            <person name="Tong Z."/>
            <person name="Li S."/>
            <person name="Ye J."/>
            <person name="Wang L."/>
            <person name="Fang L."/>
            <person name="Lei T."/>
            <person name="Chen C.-S."/>
            <person name="Chen H.-C."/>
            <person name="Xu Z."/>
            <person name="Li H."/>
            <person name="Huang H."/>
            <person name="Zhang F."/>
            <person name="Xu H."/>
            <person name="Li N."/>
            <person name="Zhao C."/>
            <person name="Li S."/>
            <person name="Dong L."/>
            <person name="Huang Y."/>
            <person name="Li L."/>
            <person name="Xi Y."/>
            <person name="Qi Q."/>
            <person name="Li W."/>
            <person name="Zhang B."/>
            <person name="Hu W."/>
            <person name="Zhang Y."/>
            <person name="Tian X."/>
            <person name="Jiao Y."/>
            <person name="Liang X."/>
            <person name="Jin J."/>
            <person name="Gao L."/>
            <person name="Zheng W."/>
            <person name="Hao B."/>
            <person name="Liu S.-M."/>
            <person name="Wang W."/>
            <person name="Yuan L."/>
            <person name="Cao M."/>
            <person name="McDermott J."/>
            <person name="Samudrala R."/>
            <person name="Wang J."/>
            <person name="Wong G.K.-S."/>
            <person name="Yang H."/>
        </authorList>
    </citation>
    <scope>NUCLEOTIDE SEQUENCE [LARGE SCALE GENOMIC DNA]</scope>
    <source>
        <strain>cv. 93-11</strain>
    </source>
</reference>
<accession>A2Y9C2</accession>
<keyword id="KW-0052">Apoplast</keyword>
<keyword id="KW-0186">Copper</keyword>
<keyword id="KW-0325">Glycoprotein</keyword>
<keyword id="KW-0439">Lignin degradation</keyword>
<keyword id="KW-0479">Metal-binding</keyword>
<keyword id="KW-0560">Oxidoreductase</keyword>
<keyword id="KW-1185">Reference proteome</keyword>
<keyword id="KW-0677">Repeat</keyword>
<keyword id="KW-0964">Secreted</keyword>
<keyword id="KW-0732">Signal</keyword>
<proteinExistence type="inferred from homology"/>
<protein>
    <recommendedName>
        <fullName>Laccase-20</fullName>
        <ecNumber>1.10.3.2</ecNumber>
    </recommendedName>
    <alternativeName>
        <fullName>Benzenediol:oxygen oxidoreductase 20</fullName>
    </alternativeName>
    <alternativeName>
        <fullName>Diphenol oxidase 20</fullName>
    </alternativeName>
    <alternativeName>
        <fullName>Urishiol oxidase 20</fullName>
    </alternativeName>
</protein>
<dbReference type="EC" id="1.10.3.2"/>
<dbReference type="EMBL" id="CM000131">
    <property type="protein sequence ID" value="EAY99682.1"/>
    <property type="molecule type" value="Genomic_DNA"/>
</dbReference>
<dbReference type="SMR" id="A2Y9C2"/>
<dbReference type="STRING" id="39946.A2Y9C2"/>
<dbReference type="GlyCosmos" id="A2Y9C2">
    <property type="glycosylation" value="8 sites, No reported glycans"/>
</dbReference>
<dbReference type="EnsemblPlants" id="BGIOSGA021911-TA">
    <property type="protein sequence ID" value="BGIOSGA021911-PA"/>
    <property type="gene ID" value="BGIOSGA021911"/>
</dbReference>
<dbReference type="Gramene" id="BGIOSGA021911-TA">
    <property type="protein sequence ID" value="BGIOSGA021911-PA"/>
    <property type="gene ID" value="BGIOSGA021911"/>
</dbReference>
<dbReference type="HOGENOM" id="CLU_006504_6_3_1"/>
<dbReference type="OMA" id="MIVLANQ"/>
<dbReference type="Proteomes" id="UP000007015">
    <property type="component" value="Chromosome 6"/>
</dbReference>
<dbReference type="GO" id="GO:0048046">
    <property type="term" value="C:apoplast"/>
    <property type="evidence" value="ECO:0007669"/>
    <property type="project" value="UniProtKB-SubCell"/>
</dbReference>
<dbReference type="GO" id="GO:0005507">
    <property type="term" value="F:copper ion binding"/>
    <property type="evidence" value="ECO:0007669"/>
    <property type="project" value="InterPro"/>
</dbReference>
<dbReference type="GO" id="GO:0052716">
    <property type="term" value="F:hydroquinone:oxygen oxidoreductase activity"/>
    <property type="evidence" value="ECO:0007669"/>
    <property type="project" value="UniProtKB-EC"/>
</dbReference>
<dbReference type="GO" id="GO:0046274">
    <property type="term" value="P:lignin catabolic process"/>
    <property type="evidence" value="ECO:0007669"/>
    <property type="project" value="UniProtKB-KW"/>
</dbReference>
<dbReference type="CDD" id="cd13849">
    <property type="entry name" value="CuRO_1_LCC_plant"/>
    <property type="match status" value="1"/>
</dbReference>
<dbReference type="CDD" id="cd13875">
    <property type="entry name" value="CuRO_2_LCC_plant"/>
    <property type="match status" value="1"/>
</dbReference>
<dbReference type="CDD" id="cd13897">
    <property type="entry name" value="CuRO_3_LCC_plant"/>
    <property type="match status" value="1"/>
</dbReference>
<dbReference type="Gene3D" id="2.60.40.420">
    <property type="entry name" value="Cupredoxins - blue copper proteins"/>
    <property type="match status" value="3"/>
</dbReference>
<dbReference type="InterPro" id="IPR011707">
    <property type="entry name" value="Cu-oxidase-like_N"/>
</dbReference>
<dbReference type="InterPro" id="IPR001117">
    <property type="entry name" value="Cu-oxidase_2nd"/>
</dbReference>
<dbReference type="InterPro" id="IPR011706">
    <property type="entry name" value="Cu-oxidase_C"/>
</dbReference>
<dbReference type="InterPro" id="IPR045087">
    <property type="entry name" value="Cu-oxidase_fam"/>
</dbReference>
<dbReference type="InterPro" id="IPR033138">
    <property type="entry name" value="Cu_oxidase_CS"/>
</dbReference>
<dbReference type="InterPro" id="IPR002355">
    <property type="entry name" value="Cu_oxidase_Cu_BS"/>
</dbReference>
<dbReference type="InterPro" id="IPR008972">
    <property type="entry name" value="Cupredoxin"/>
</dbReference>
<dbReference type="InterPro" id="IPR034288">
    <property type="entry name" value="CuRO_1_LCC"/>
</dbReference>
<dbReference type="InterPro" id="IPR034285">
    <property type="entry name" value="CuRO_2_LCC"/>
</dbReference>
<dbReference type="InterPro" id="IPR034289">
    <property type="entry name" value="CuRO_3_LCC"/>
</dbReference>
<dbReference type="PANTHER" id="PTHR11709:SF86">
    <property type="entry name" value="LACCASE-18"/>
    <property type="match status" value="1"/>
</dbReference>
<dbReference type="PANTHER" id="PTHR11709">
    <property type="entry name" value="MULTI-COPPER OXIDASE"/>
    <property type="match status" value="1"/>
</dbReference>
<dbReference type="Pfam" id="PF00394">
    <property type="entry name" value="Cu-oxidase"/>
    <property type="match status" value="1"/>
</dbReference>
<dbReference type="Pfam" id="PF07731">
    <property type="entry name" value="Cu-oxidase_2"/>
    <property type="match status" value="1"/>
</dbReference>
<dbReference type="Pfam" id="PF07732">
    <property type="entry name" value="Cu-oxidase_3"/>
    <property type="match status" value="1"/>
</dbReference>
<dbReference type="SUPFAM" id="SSF49503">
    <property type="entry name" value="Cupredoxins"/>
    <property type="match status" value="3"/>
</dbReference>
<dbReference type="PROSITE" id="PS00079">
    <property type="entry name" value="MULTICOPPER_OXIDASE1"/>
    <property type="match status" value="1"/>
</dbReference>
<dbReference type="PROSITE" id="PS00080">
    <property type="entry name" value="MULTICOPPER_OXIDASE2"/>
    <property type="match status" value="1"/>
</dbReference>